<name>SODM_LISMO</name>
<proteinExistence type="inferred from homology"/>
<gene>
    <name type="primary">sodA</name>
    <name type="synonym">sod</name>
    <name type="ordered locus">lmo1439</name>
</gene>
<reference key="1">
    <citation type="journal article" date="1992" name="Gene">
        <title>A gene encoding a superoxide dismutase of the facultative intracellular bacterium Listeria monocytogenes.</title>
        <authorList>
            <person name="Brehm K."/>
            <person name="Haas A."/>
            <person name="Goebel W."/>
            <person name="Kreft J."/>
        </authorList>
    </citation>
    <scope>NUCLEOTIDE SEQUENCE [GENOMIC DNA]</scope>
    <source>
        <strain>EGD / Serovar 1/2a</strain>
    </source>
</reference>
<reference key="2">
    <citation type="journal article" date="2001" name="Science">
        <title>Comparative genomics of Listeria species.</title>
        <authorList>
            <person name="Glaser P."/>
            <person name="Frangeul L."/>
            <person name="Buchrieser C."/>
            <person name="Rusniok C."/>
            <person name="Amend A."/>
            <person name="Baquero F."/>
            <person name="Berche P."/>
            <person name="Bloecker H."/>
            <person name="Brandt P."/>
            <person name="Chakraborty T."/>
            <person name="Charbit A."/>
            <person name="Chetouani F."/>
            <person name="Couve E."/>
            <person name="de Daruvar A."/>
            <person name="Dehoux P."/>
            <person name="Domann E."/>
            <person name="Dominguez-Bernal G."/>
            <person name="Duchaud E."/>
            <person name="Durant L."/>
            <person name="Dussurget O."/>
            <person name="Entian K.-D."/>
            <person name="Fsihi H."/>
            <person name="Garcia-del Portillo F."/>
            <person name="Garrido P."/>
            <person name="Gautier L."/>
            <person name="Goebel W."/>
            <person name="Gomez-Lopez N."/>
            <person name="Hain T."/>
            <person name="Hauf J."/>
            <person name="Jackson D."/>
            <person name="Jones L.-M."/>
            <person name="Kaerst U."/>
            <person name="Kreft J."/>
            <person name="Kuhn M."/>
            <person name="Kunst F."/>
            <person name="Kurapkat G."/>
            <person name="Madueno E."/>
            <person name="Maitournam A."/>
            <person name="Mata Vicente J."/>
            <person name="Ng E."/>
            <person name="Nedjari H."/>
            <person name="Nordsiek G."/>
            <person name="Novella S."/>
            <person name="de Pablos B."/>
            <person name="Perez-Diaz J.-C."/>
            <person name="Purcell R."/>
            <person name="Remmel B."/>
            <person name="Rose M."/>
            <person name="Schlueter T."/>
            <person name="Simoes N."/>
            <person name="Tierrez A."/>
            <person name="Vazquez-Boland J.-A."/>
            <person name="Voss H."/>
            <person name="Wehland J."/>
            <person name="Cossart P."/>
        </authorList>
    </citation>
    <scope>NUCLEOTIDE SEQUENCE [LARGE SCALE GENOMIC DNA]</scope>
    <source>
        <strain>ATCC BAA-679 / EGD-e</strain>
    </source>
</reference>
<comment type="function">
    <text>Destroys superoxide anion radicals which are normally produced within the cells and which are toxic to biological systems.</text>
</comment>
<comment type="catalytic activity">
    <reaction>
        <text>2 superoxide + 2 H(+) = H2O2 + O2</text>
        <dbReference type="Rhea" id="RHEA:20696"/>
        <dbReference type="ChEBI" id="CHEBI:15378"/>
        <dbReference type="ChEBI" id="CHEBI:15379"/>
        <dbReference type="ChEBI" id="CHEBI:16240"/>
        <dbReference type="ChEBI" id="CHEBI:18421"/>
        <dbReference type="EC" id="1.15.1.1"/>
    </reaction>
</comment>
<comment type="cofactor">
    <cofactor evidence="1">
        <name>Mn(2+)</name>
        <dbReference type="ChEBI" id="CHEBI:29035"/>
    </cofactor>
    <text evidence="1">Binds 1 Mn(2+) ion per subunit.</text>
</comment>
<comment type="subunit">
    <text evidence="1">Homodimer.</text>
</comment>
<comment type="similarity">
    <text evidence="2">Belongs to the iron/manganese superoxide dismutase family.</text>
</comment>
<protein>
    <recommendedName>
        <fullName>Superoxide dismutase [Mn]</fullName>
        <ecNumber>1.15.1.1</ecNumber>
    </recommendedName>
</protein>
<accession>P28764</accession>
<dbReference type="EC" id="1.15.1.1"/>
<dbReference type="EMBL" id="M80526">
    <property type="protein sequence ID" value="AAA25292.1"/>
    <property type="molecule type" value="Genomic_DNA"/>
</dbReference>
<dbReference type="EMBL" id="AL591979">
    <property type="protein sequence ID" value="CAC99517.1"/>
    <property type="molecule type" value="Genomic_DNA"/>
</dbReference>
<dbReference type="PIR" id="AG1254">
    <property type="entry name" value="AG1254"/>
</dbReference>
<dbReference type="PIR" id="JC1272">
    <property type="entry name" value="JC1272"/>
</dbReference>
<dbReference type="RefSeq" id="NP_464964.1">
    <property type="nucleotide sequence ID" value="NC_003210.1"/>
</dbReference>
<dbReference type="RefSeq" id="WP_003721944.1">
    <property type="nucleotide sequence ID" value="NZ_CP149495.1"/>
</dbReference>
<dbReference type="SMR" id="P28764"/>
<dbReference type="STRING" id="169963.gene:17594096"/>
<dbReference type="PaxDb" id="169963-lmo1439"/>
<dbReference type="EnsemblBacteria" id="CAC99517">
    <property type="protein sequence ID" value="CAC99517"/>
    <property type="gene ID" value="CAC99517"/>
</dbReference>
<dbReference type="GeneID" id="986791"/>
<dbReference type="KEGG" id="lmo:lmo1439"/>
<dbReference type="PATRIC" id="fig|169963.11.peg.1478"/>
<dbReference type="eggNOG" id="COG0605">
    <property type="taxonomic scope" value="Bacteria"/>
</dbReference>
<dbReference type="HOGENOM" id="CLU_031625_0_1_9"/>
<dbReference type="OrthoDB" id="9803125at2"/>
<dbReference type="PhylomeDB" id="P28764"/>
<dbReference type="BioCyc" id="LMON169963:LMO1439-MONOMER"/>
<dbReference type="Proteomes" id="UP000000817">
    <property type="component" value="Chromosome"/>
</dbReference>
<dbReference type="GO" id="GO:0005737">
    <property type="term" value="C:cytoplasm"/>
    <property type="evidence" value="ECO:0000318"/>
    <property type="project" value="GO_Central"/>
</dbReference>
<dbReference type="GO" id="GO:0046872">
    <property type="term" value="F:metal ion binding"/>
    <property type="evidence" value="ECO:0007669"/>
    <property type="project" value="UniProtKB-KW"/>
</dbReference>
<dbReference type="GO" id="GO:0004784">
    <property type="term" value="F:superoxide dismutase activity"/>
    <property type="evidence" value="ECO:0000318"/>
    <property type="project" value="GO_Central"/>
</dbReference>
<dbReference type="GO" id="GO:0019430">
    <property type="term" value="P:removal of superoxide radicals"/>
    <property type="evidence" value="ECO:0000318"/>
    <property type="project" value="GO_Central"/>
</dbReference>
<dbReference type="FunFam" id="1.10.287.990:FF:000001">
    <property type="entry name" value="Superoxide dismutase"/>
    <property type="match status" value="1"/>
</dbReference>
<dbReference type="FunFam" id="3.55.40.20:FF:000001">
    <property type="entry name" value="Superoxide dismutase"/>
    <property type="match status" value="1"/>
</dbReference>
<dbReference type="Gene3D" id="1.10.287.990">
    <property type="entry name" value="Fe,Mn superoxide dismutase (SOD) domain"/>
    <property type="match status" value="1"/>
</dbReference>
<dbReference type="Gene3D" id="3.55.40.20">
    <property type="entry name" value="Iron/manganese superoxide dismutase, C-terminal domain"/>
    <property type="match status" value="1"/>
</dbReference>
<dbReference type="InterPro" id="IPR001189">
    <property type="entry name" value="Mn/Fe_SOD"/>
</dbReference>
<dbReference type="InterPro" id="IPR019833">
    <property type="entry name" value="Mn/Fe_SOD_BS"/>
</dbReference>
<dbReference type="InterPro" id="IPR019832">
    <property type="entry name" value="Mn/Fe_SOD_C"/>
</dbReference>
<dbReference type="InterPro" id="IPR019831">
    <property type="entry name" value="Mn/Fe_SOD_N"/>
</dbReference>
<dbReference type="InterPro" id="IPR036324">
    <property type="entry name" value="Mn/Fe_SOD_N_sf"/>
</dbReference>
<dbReference type="InterPro" id="IPR036314">
    <property type="entry name" value="SOD_C_sf"/>
</dbReference>
<dbReference type="PANTHER" id="PTHR43595">
    <property type="entry name" value="37S RIBOSOMAL PROTEIN S26, MITOCHONDRIAL"/>
    <property type="match status" value="1"/>
</dbReference>
<dbReference type="PANTHER" id="PTHR43595:SF2">
    <property type="entry name" value="SMALL RIBOSOMAL SUBUNIT PROTEIN MS42"/>
    <property type="match status" value="1"/>
</dbReference>
<dbReference type="Pfam" id="PF02777">
    <property type="entry name" value="Sod_Fe_C"/>
    <property type="match status" value="1"/>
</dbReference>
<dbReference type="Pfam" id="PF00081">
    <property type="entry name" value="Sod_Fe_N"/>
    <property type="match status" value="1"/>
</dbReference>
<dbReference type="PIRSF" id="PIRSF000349">
    <property type="entry name" value="SODismutase"/>
    <property type="match status" value="1"/>
</dbReference>
<dbReference type="PRINTS" id="PR01703">
    <property type="entry name" value="MNSODISMTASE"/>
</dbReference>
<dbReference type="SUPFAM" id="SSF54719">
    <property type="entry name" value="Fe,Mn superoxide dismutase (SOD), C-terminal domain"/>
    <property type="match status" value="1"/>
</dbReference>
<dbReference type="SUPFAM" id="SSF46609">
    <property type="entry name" value="Fe,Mn superoxide dismutase (SOD), N-terminal domain"/>
    <property type="match status" value="1"/>
</dbReference>
<dbReference type="PROSITE" id="PS00088">
    <property type="entry name" value="SOD_MN"/>
    <property type="match status" value="1"/>
</dbReference>
<organism>
    <name type="scientific">Listeria monocytogenes serovar 1/2a (strain ATCC BAA-679 / EGD-e)</name>
    <dbReference type="NCBI Taxonomy" id="169963"/>
    <lineage>
        <taxon>Bacteria</taxon>
        <taxon>Bacillati</taxon>
        <taxon>Bacillota</taxon>
        <taxon>Bacilli</taxon>
        <taxon>Bacillales</taxon>
        <taxon>Listeriaceae</taxon>
        <taxon>Listeria</taxon>
    </lineage>
</organism>
<feature type="chain" id="PRO_0000160044" description="Superoxide dismutase [Mn]">
    <location>
        <begin position="1"/>
        <end position="202"/>
    </location>
</feature>
<feature type="binding site" evidence="1">
    <location>
        <position position="27"/>
    </location>
    <ligand>
        <name>Mn(2+)</name>
        <dbReference type="ChEBI" id="CHEBI:29035"/>
    </ligand>
</feature>
<feature type="binding site" evidence="1">
    <location>
        <position position="82"/>
    </location>
    <ligand>
        <name>Mn(2+)</name>
        <dbReference type="ChEBI" id="CHEBI:29035"/>
    </ligand>
</feature>
<feature type="binding site" evidence="1">
    <location>
        <position position="164"/>
    </location>
    <ligand>
        <name>Mn(2+)</name>
        <dbReference type="ChEBI" id="CHEBI:29035"/>
    </ligand>
</feature>
<feature type="binding site" evidence="1">
    <location>
        <position position="168"/>
    </location>
    <ligand>
        <name>Mn(2+)</name>
        <dbReference type="ChEBI" id="CHEBI:29035"/>
    </ligand>
</feature>
<keyword id="KW-0464">Manganese</keyword>
<keyword id="KW-0479">Metal-binding</keyword>
<keyword id="KW-0560">Oxidoreductase</keyword>
<keyword id="KW-1185">Reference proteome</keyword>
<sequence length="202" mass="22631">MTYELPKLPYTYDALEPNFDKETMEIHYTKHHNTYVTKLNEAVAGHPELASKSAEELVTNLDSVPEDIRGAVRNHGGGHANHTLFWSILSPNGGGAPTGNLKAAIESEFGTFDEFKEKFNAAAAARFGSGWAWLVVNDGKLEIVSTANQDSPLSDGKTPVLGLDVWEHAYYLKFQNRRPEYIETFWNVINWDEANKRFDAAK</sequence>
<evidence type="ECO:0000250" key="1"/>
<evidence type="ECO:0000305" key="2"/>